<proteinExistence type="evidence at protein level"/>
<gene>
    <name evidence="16" type="primary">wgn</name>
    <name evidence="13" type="synonym">Vader</name>
    <name evidence="16" type="ORF">CG6531</name>
</gene>
<dbReference type="EMBL" id="AB085747">
    <property type="protein sequence ID" value="BAC01264.1"/>
    <property type="molecule type" value="mRNA"/>
</dbReference>
<dbReference type="EMBL" id="AE014298">
    <property type="protein sequence ID" value="AAF48864.2"/>
    <property type="molecule type" value="Genomic_DNA"/>
</dbReference>
<dbReference type="EMBL" id="AY118385">
    <property type="protein sequence ID" value="AAM48414.1"/>
    <property type="molecule type" value="mRNA"/>
</dbReference>
<dbReference type="EMBL" id="AY115552">
    <property type="protein sequence ID" value="AAM66764.1"/>
    <property type="molecule type" value="mRNA"/>
</dbReference>
<dbReference type="RefSeq" id="NP_728186.1">
    <property type="nucleotide sequence ID" value="NM_167626.2"/>
</dbReference>
<dbReference type="FunCoup" id="Q9VWS4">
    <property type="interactions" value="164"/>
</dbReference>
<dbReference type="IntAct" id="Q9VWS4">
    <property type="interactions" value="2"/>
</dbReference>
<dbReference type="STRING" id="7227.FBpp0074388"/>
<dbReference type="PaxDb" id="7227-FBpp0074388"/>
<dbReference type="DNASU" id="32849"/>
<dbReference type="EnsemblMetazoa" id="FBtr0074617">
    <property type="protein sequence ID" value="FBpp0074388"/>
    <property type="gene ID" value="FBgn0030941"/>
</dbReference>
<dbReference type="GeneID" id="32849"/>
<dbReference type="KEGG" id="dme:Dmel_CG6531"/>
<dbReference type="UCSC" id="CG6531-RA">
    <property type="organism name" value="d. melanogaster"/>
</dbReference>
<dbReference type="AGR" id="FB:FBgn0030941"/>
<dbReference type="CTD" id="32849"/>
<dbReference type="FlyBase" id="FBgn0030941">
    <property type="gene designation" value="wgn"/>
</dbReference>
<dbReference type="VEuPathDB" id="VectorBase:FBgn0030941"/>
<dbReference type="eggNOG" id="ENOG502SCIN">
    <property type="taxonomic scope" value="Eukaryota"/>
</dbReference>
<dbReference type="HOGENOM" id="CLU_069708_0_0_1"/>
<dbReference type="InParanoid" id="Q9VWS4"/>
<dbReference type="OMA" id="MPCTSCQ"/>
<dbReference type="OrthoDB" id="6126731at2759"/>
<dbReference type="PhylomeDB" id="Q9VWS4"/>
<dbReference type="BioGRID-ORCS" id="32849">
    <property type="hits" value="0 hits in 1 CRISPR screen"/>
</dbReference>
<dbReference type="GenomeRNAi" id="32849"/>
<dbReference type="PRO" id="PR:Q9VWS4"/>
<dbReference type="Proteomes" id="UP000000803">
    <property type="component" value="Chromosome X"/>
</dbReference>
<dbReference type="Bgee" id="FBgn0030941">
    <property type="expression patterns" value="Expressed in crop (Drosophila) and 109 other cell types or tissues"/>
</dbReference>
<dbReference type="ExpressionAtlas" id="Q9VWS4">
    <property type="expression patterns" value="baseline and differential"/>
</dbReference>
<dbReference type="GO" id="GO:0009986">
    <property type="term" value="C:cell surface"/>
    <property type="evidence" value="ECO:0000314"/>
    <property type="project" value="UniProtKB"/>
</dbReference>
<dbReference type="GO" id="GO:0005886">
    <property type="term" value="C:plasma membrane"/>
    <property type="evidence" value="ECO:0000314"/>
    <property type="project" value="FlyBase"/>
</dbReference>
<dbReference type="GO" id="GO:0005031">
    <property type="term" value="F:tumor necrosis factor receptor activity"/>
    <property type="evidence" value="ECO:0000314"/>
    <property type="project" value="FlyBase"/>
</dbReference>
<dbReference type="GO" id="GO:0006915">
    <property type="term" value="P:apoptotic process"/>
    <property type="evidence" value="ECO:0000314"/>
    <property type="project" value="UniProtKB"/>
</dbReference>
<dbReference type="GO" id="GO:1900074">
    <property type="term" value="P:negative regulation of neuromuscular synaptic transmission"/>
    <property type="evidence" value="ECO:0000316"/>
    <property type="project" value="FlyBase"/>
</dbReference>
<dbReference type="GO" id="GO:0070050">
    <property type="term" value="P:neuron cellular homeostasis"/>
    <property type="evidence" value="ECO:0000316"/>
    <property type="project" value="FlyBase"/>
</dbReference>
<dbReference type="GO" id="GO:0072499">
    <property type="term" value="P:photoreceptor cell axon guidance"/>
    <property type="evidence" value="ECO:0000315"/>
    <property type="project" value="FlyBase"/>
</dbReference>
<dbReference type="GO" id="GO:0043068">
    <property type="term" value="P:positive regulation of programmed cell death"/>
    <property type="evidence" value="ECO:0000316"/>
    <property type="project" value="FlyBase"/>
</dbReference>
<dbReference type="GO" id="GO:0033209">
    <property type="term" value="P:tumor necrosis factor-mediated signaling pathway"/>
    <property type="evidence" value="ECO:0000316"/>
    <property type="project" value="FlyBase"/>
</dbReference>
<dbReference type="Gene3D" id="2.10.50.10">
    <property type="entry name" value="Tumor Necrosis Factor Receptor, subunit A, domain 2"/>
    <property type="match status" value="1"/>
</dbReference>
<dbReference type="InterPro" id="IPR001368">
    <property type="entry name" value="TNFR/NGFR_Cys_rich_reg"/>
</dbReference>
<dbReference type="Pfam" id="PF00020">
    <property type="entry name" value="TNFR_c6"/>
    <property type="match status" value="1"/>
</dbReference>
<dbReference type="SMART" id="SM00208">
    <property type="entry name" value="TNFR"/>
    <property type="match status" value="1"/>
</dbReference>
<dbReference type="PROSITE" id="PS50050">
    <property type="entry name" value="TNFR_NGFR_2"/>
    <property type="match status" value="1"/>
</dbReference>
<name>WGN_DROME</name>
<sequence>MMPPRLPGGHGGAMRSRSSSSGHHLNTTFHKRRRRRQQHHIGGSHISISHGSYLALLLLSTTCSLVATSASSSSSAANTDIAPPDPPPVSQVSIASSSPCAPQHWWDSQRDRCTPCTRCQGEMIPLRPCQLHTDTICGSIYDLKIDWVVLAKTEPNWKERRKSSEYEHFEHNAPLQHLTHEQLQQLHEEAAAAWVLDWQTGVLYVAVLTCLVFFSVAACILIHHMRQWRRMERRLDQDVEELSTKLMAKLAEVQSLDGGTFFIGNADALRGLPASAATTHPATTQSGIFQPQHVLLPEKRGKHQERRILKTLQPGNVYIEESNAGLGGMGVGLGVRGCSGLKG</sequence>
<feature type="signal peptide" evidence="1">
    <location>
        <begin position="1"/>
        <end position="76"/>
    </location>
</feature>
<feature type="chain" id="PRO_0000434983" description="Tumor necrosis factor receptor superfamily member wgn" evidence="1">
    <location>
        <begin position="77"/>
        <end position="343"/>
    </location>
</feature>
<feature type="topological domain" description="Extracellular" evidence="12">
    <location>
        <begin position="77"/>
        <end position="201"/>
    </location>
</feature>
<feature type="transmembrane region" description="Helical" evidence="1">
    <location>
        <begin position="202"/>
        <end position="222"/>
    </location>
</feature>
<feature type="topological domain" description="Cytoplasmic" evidence="12">
    <location>
        <begin position="223"/>
        <end position="343"/>
    </location>
</feature>
<feature type="repeat" description="TNFR-Cys" evidence="2">
    <location>
        <begin position="99"/>
        <end position="137"/>
    </location>
</feature>
<feature type="region of interest" description="Disordered" evidence="3">
    <location>
        <begin position="1"/>
        <end position="44"/>
    </location>
</feature>
<feature type="region of interest" description="Disordered" evidence="3">
    <location>
        <begin position="74"/>
        <end position="96"/>
    </location>
</feature>
<feature type="coiled-coil region" evidence="1">
    <location>
        <begin position="225"/>
        <end position="257"/>
    </location>
</feature>
<feature type="compositionally biased region" description="Low complexity" evidence="3">
    <location>
        <begin position="13"/>
        <end position="24"/>
    </location>
</feature>
<feature type="compositionally biased region" description="Basic residues" evidence="3">
    <location>
        <begin position="29"/>
        <end position="39"/>
    </location>
</feature>
<feature type="disulfide bond" evidence="2">
    <location>
        <begin position="100"/>
        <end position="113"/>
    </location>
</feature>
<feature type="disulfide bond" evidence="2">
    <location>
        <begin position="116"/>
        <end position="129"/>
    </location>
</feature>
<feature type="disulfide bond" evidence="2">
    <location>
        <begin position="119"/>
        <end position="137"/>
    </location>
</feature>
<organism evidence="17">
    <name type="scientific">Drosophila melanogaster</name>
    <name type="common">Fruit fly</name>
    <dbReference type="NCBI Taxonomy" id="7227"/>
    <lineage>
        <taxon>Eukaryota</taxon>
        <taxon>Metazoa</taxon>
        <taxon>Ecdysozoa</taxon>
        <taxon>Arthropoda</taxon>
        <taxon>Hexapoda</taxon>
        <taxon>Insecta</taxon>
        <taxon>Pterygota</taxon>
        <taxon>Neoptera</taxon>
        <taxon>Endopterygota</taxon>
        <taxon>Diptera</taxon>
        <taxon>Brachycera</taxon>
        <taxon>Muscomorpha</taxon>
        <taxon>Ephydroidea</taxon>
        <taxon>Drosophilidae</taxon>
        <taxon>Drosophila</taxon>
        <taxon>Sophophora</taxon>
    </lineage>
</organism>
<protein>
    <recommendedName>
        <fullName evidence="11">Tumor necrosis factor receptor superfamily member wgn</fullName>
    </recommendedName>
    <alternativeName>
        <fullName evidence="16">Protein wengen</fullName>
    </alternativeName>
</protein>
<keyword id="KW-0053">Apoptosis</keyword>
<keyword id="KW-1003">Cell membrane</keyword>
<keyword id="KW-0175">Coiled coil</keyword>
<keyword id="KW-0968">Cytoplasmic vesicle</keyword>
<keyword id="KW-1015">Disulfide bond</keyword>
<keyword id="KW-0472">Membrane</keyword>
<keyword id="KW-0524">Neurogenesis</keyword>
<keyword id="KW-0675">Receptor</keyword>
<keyword id="KW-1185">Reference proteome</keyword>
<keyword id="KW-0732">Signal</keyword>
<keyword id="KW-0812">Transmembrane</keyword>
<keyword id="KW-1133">Transmembrane helix</keyword>
<comment type="function">
    <text evidence="4 5 6 7 8 9">Receptor for egr (PubMed:12084706, PubMed:12894227, PubMed:33824334). Involved in induction of apoptosis by triggering JNK signaling (PubMed:12894227). Mediates the tumor suppressor activity of egr which eliminates oncogenic cells from epithelia, thereby maintaining epithelial integrity (PubMed:19289090). Following UV-induced epidermal damage, binds to egr released from apoptotic epidermal cells and plays a role in development of thermal allodynia, a responsiveness to subthreshold thermal stimuli which are not normally perceived as noxious (PubMed:19375319). Together with Moe, involved in control of axon targeting of R8 and R2-R5 photoreceptors, independent of egr (PubMed:23544124).</text>
</comment>
<comment type="subunit">
    <text evidence="4 5 8 9">Monomer (PubMed:33824334). Interacts (via extracellular cystein-rich domain) with egr (via secreted TNF-homology soluble form); forms heterohexamers when 3 copies associate with egr trimers (PubMed:12084706, PubMed:33824334). Interacts with Traf6 (PubMed:12894227). Interacts with Moe (PubMed:23544124).</text>
</comment>
<comment type="interaction">
    <interactant intactId="EBI-161953">
        <id>Q9VWS4</id>
    </interactant>
    <interactant intactId="EBI-108054">
        <id>Q8MUJ1</id>
        <label>egr</label>
    </interactant>
    <organismsDiffer>false</organismsDiffer>
    <experiments>3</experiments>
</comment>
<comment type="subcellular location">
    <subcellularLocation>
        <location evidence="4">Cell membrane</location>
        <topology evidence="12">Single-pass type I membrane protein</topology>
    </subcellularLocation>
    <subcellularLocation>
        <location evidence="9">Cytoplasmic vesicle membrane</location>
        <topology evidence="12">Single-pass type I membrane protein</topology>
    </subcellularLocation>
</comment>
<comment type="tissue specificity">
    <text evidence="5 8 10">Expressed in the adult midgut; under normal conditions expressed at higher levels than the other TNF receptor grnd.</text>
</comment>
<comment type="developmental stage">
    <text evidence="4">Present at all stages of development with expression detected in embryo, larva, pupa and adult (PubMed:12084706). In third instar larvae, detected in photoreceptor neurons, including R8 photoreceptors, and also in adult head (at protein level) (PubMed:23544124). Expression appears to be very low or undetectable in pregastrulating embryos. During gastrulation, detected in the inner layer of embryonic tissue corresponding to the presumptive mesoderm. At germ band extended stages, continues to accumulate in the mesodermal segments of the embryo. In later-staged embryos (stages 15/16), detected in subsets of cells within the condensing nerve cord (PubMed:12894227).</text>
</comment>
<comment type="induction">
    <text evidence="10">Down-regulated by bacterial infection in the gut.</text>
</comment>
<comment type="disruption phenotype">
    <text>RNAi-mediated knockdown in gut progenitor cells, enterocytes or cells of the enteroblast-enterocyte lineage does not affect stress-induced intestinal stem cell proliferation.</text>
</comment>
<comment type="miscellaneous">
    <text evidence="11">'wengen' is named after a village at the foot of the Eiger mountain after which the TNF gene egr is named.</text>
</comment>
<reference evidence="15" key="1">
    <citation type="journal article" date="2002" name="J. Biol. Chem.">
        <title>Wengen, a member of the Drosophila tumor necrosis factor receptor superfamily, is required for Eiger signaling.</title>
        <authorList>
            <person name="Kanda H."/>
            <person name="Igaki T."/>
            <person name="Kanuka H."/>
            <person name="Yagi T."/>
            <person name="Miura M."/>
        </authorList>
    </citation>
    <scope>NUCLEOTIDE SEQUENCE [MRNA]</scope>
    <scope>FUNCTION</scope>
    <scope>INTERACTION WITH EGR</scope>
    <scope>SUBCELLULAR LOCATION</scope>
    <scope>DEVELOPMENTAL STAGE</scope>
</reference>
<reference evidence="17" key="2">
    <citation type="journal article" date="2000" name="Science">
        <title>The genome sequence of Drosophila melanogaster.</title>
        <authorList>
            <person name="Adams M.D."/>
            <person name="Celniker S.E."/>
            <person name="Holt R.A."/>
            <person name="Evans C.A."/>
            <person name="Gocayne J.D."/>
            <person name="Amanatides P.G."/>
            <person name="Scherer S.E."/>
            <person name="Li P.W."/>
            <person name="Hoskins R.A."/>
            <person name="Galle R.F."/>
            <person name="George R.A."/>
            <person name="Lewis S.E."/>
            <person name="Richards S."/>
            <person name="Ashburner M."/>
            <person name="Henderson S.N."/>
            <person name="Sutton G.G."/>
            <person name="Wortman J.R."/>
            <person name="Yandell M.D."/>
            <person name="Zhang Q."/>
            <person name="Chen L.X."/>
            <person name="Brandon R.C."/>
            <person name="Rogers Y.-H.C."/>
            <person name="Blazej R.G."/>
            <person name="Champe M."/>
            <person name="Pfeiffer B.D."/>
            <person name="Wan K.H."/>
            <person name="Doyle C."/>
            <person name="Baxter E.G."/>
            <person name="Helt G."/>
            <person name="Nelson C.R."/>
            <person name="Miklos G.L.G."/>
            <person name="Abril J.F."/>
            <person name="Agbayani A."/>
            <person name="An H.-J."/>
            <person name="Andrews-Pfannkoch C."/>
            <person name="Baldwin D."/>
            <person name="Ballew R.M."/>
            <person name="Basu A."/>
            <person name="Baxendale J."/>
            <person name="Bayraktaroglu L."/>
            <person name="Beasley E.M."/>
            <person name="Beeson K.Y."/>
            <person name="Benos P.V."/>
            <person name="Berman B.P."/>
            <person name="Bhandari D."/>
            <person name="Bolshakov S."/>
            <person name="Borkova D."/>
            <person name="Botchan M.R."/>
            <person name="Bouck J."/>
            <person name="Brokstein P."/>
            <person name="Brottier P."/>
            <person name="Burtis K.C."/>
            <person name="Busam D.A."/>
            <person name="Butler H."/>
            <person name="Cadieu E."/>
            <person name="Center A."/>
            <person name="Chandra I."/>
            <person name="Cherry J.M."/>
            <person name="Cawley S."/>
            <person name="Dahlke C."/>
            <person name="Davenport L.B."/>
            <person name="Davies P."/>
            <person name="de Pablos B."/>
            <person name="Delcher A."/>
            <person name="Deng Z."/>
            <person name="Mays A.D."/>
            <person name="Dew I."/>
            <person name="Dietz S.M."/>
            <person name="Dodson K."/>
            <person name="Doup L.E."/>
            <person name="Downes M."/>
            <person name="Dugan-Rocha S."/>
            <person name="Dunkov B.C."/>
            <person name="Dunn P."/>
            <person name="Durbin K.J."/>
            <person name="Evangelista C.C."/>
            <person name="Ferraz C."/>
            <person name="Ferriera S."/>
            <person name="Fleischmann W."/>
            <person name="Fosler C."/>
            <person name="Gabrielian A.E."/>
            <person name="Garg N.S."/>
            <person name="Gelbart W.M."/>
            <person name="Glasser K."/>
            <person name="Glodek A."/>
            <person name="Gong F."/>
            <person name="Gorrell J.H."/>
            <person name="Gu Z."/>
            <person name="Guan P."/>
            <person name="Harris M."/>
            <person name="Harris N.L."/>
            <person name="Harvey D.A."/>
            <person name="Heiman T.J."/>
            <person name="Hernandez J.R."/>
            <person name="Houck J."/>
            <person name="Hostin D."/>
            <person name="Houston K.A."/>
            <person name="Howland T.J."/>
            <person name="Wei M.-H."/>
            <person name="Ibegwam C."/>
            <person name="Jalali M."/>
            <person name="Kalush F."/>
            <person name="Karpen G.H."/>
            <person name="Ke Z."/>
            <person name="Kennison J.A."/>
            <person name="Ketchum K.A."/>
            <person name="Kimmel B.E."/>
            <person name="Kodira C.D."/>
            <person name="Kraft C.L."/>
            <person name="Kravitz S."/>
            <person name="Kulp D."/>
            <person name="Lai Z."/>
            <person name="Lasko P."/>
            <person name="Lei Y."/>
            <person name="Levitsky A.A."/>
            <person name="Li J.H."/>
            <person name="Li Z."/>
            <person name="Liang Y."/>
            <person name="Lin X."/>
            <person name="Liu X."/>
            <person name="Mattei B."/>
            <person name="McIntosh T.C."/>
            <person name="McLeod M.P."/>
            <person name="McPherson D."/>
            <person name="Merkulov G."/>
            <person name="Milshina N.V."/>
            <person name="Mobarry C."/>
            <person name="Morris J."/>
            <person name="Moshrefi A."/>
            <person name="Mount S.M."/>
            <person name="Moy M."/>
            <person name="Murphy B."/>
            <person name="Murphy L."/>
            <person name="Muzny D.M."/>
            <person name="Nelson D.L."/>
            <person name="Nelson D.R."/>
            <person name="Nelson K.A."/>
            <person name="Nixon K."/>
            <person name="Nusskern D.R."/>
            <person name="Pacleb J.M."/>
            <person name="Palazzolo M."/>
            <person name="Pittman G.S."/>
            <person name="Pan S."/>
            <person name="Pollard J."/>
            <person name="Puri V."/>
            <person name="Reese M.G."/>
            <person name="Reinert K."/>
            <person name="Remington K."/>
            <person name="Saunders R.D.C."/>
            <person name="Scheeler F."/>
            <person name="Shen H."/>
            <person name="Shue B.C."/>
            <person name="Siden-Kiamos I."/>
            <person name="Simpson M."/>
            <person name="Skupski M.P."/>
            <person name="Smith T.J."/>
            <person name="Spier E."/>
            <person name="Spradling A.C."/>
            <person name="Stapleton M."/>
            <person name="Strong R."/>
            <person name="Sun E."/>
            <person name="Svirskas R."/>
            <person name="Tector C."/>
            <person name="Turner R."/>
            <person name="Venter E."/>
            <person name="Wang A.H."/>
            <person name="Wang X."/>
            <person name="Wang Z.-Y."/>
            <person name="Wassarman D.A."/>
            <person name="Weinstock G.M."/>
            <person name="Weissenbach J."/>
            <person name="Williams S.M."/>
            <person name="Woodage T."/>
            <person name="Worley K.C."/>
            <person name="Wu D."/>
            <person name="Yang S."/>
            <person name="Yao Q.A."/>
            <person name="Ye J."/>
            <person name="Yeh R.-F."/>
            <person name="Zaveri J.S."/>
            <person name="Zhan M."/>
            <person name="Zhang G."/>
            <person name="Zhao Q."/>
            <person name="Zheng L."/>
            <person name="Zheng X.H."/>
            <person name="Zhong F.N."/>
            <person name="Zhong W."/>
            <person name="Zhou X."/>
            <person name="Zhu S.C."/>
            <person name="Zhu X."/>
            <person name="Smith H.O."/>
            <person name="Gibbs R.A."/>
            <person name="Myers E.W."/>
            <person name="Rubin G.M."/>
            <person name="Venter J.C."/>
        </authorList>
    </citation>
    <scope>NUCLEOTIDE SEQUENCE [LARGE SCALE GENOMIC DNA]</scope>
    <source>
        <strain evidence="17">Berkeley</strain>
    </source>
</reference>
<reference evidence="17" key="3">
    <citation type="journal article" date="2002" name="Genome Biol.">
        <title>Annotation of the Drosophila melanogaster euchromatic genome: a systematic review.</title>
        <authorList>
            <person name="Misra S."/>
            <person name="Crosby M.A."/>
            <person name="Mungall C.J."/>
            <person name="Matthews B.B."/>
            <person name="Campbell K.S."/>
            <person name="Hradecky P."/>
            <person name="Huang Y."/>
            <person name="Kaminker J.S."/>
            <person name="Millburn G.H."/>
            <person name="Prochnik S.E."/>
            <person name="Smith C.D."/>
            <person name="Tupy J.L."/>
            <person name="Whitfield E.J."/>
            <person name="Bayraktaroglu L."/>
            <person name="Berman B.P."/>
            <person name="Bettencourt B.R."/>
            <person name="Celniker S.E."/>
            <person name="de Grey A.D.N.J."/>
            <person name="Drysdale R.A."/>
            <person name="Harris N.L."/>
            <person name="Richter J."/>
            <person name="Russo S."/>
            <person name="Schroeder A.J."/>
            <person name="Shu S.Q."/>
            <person name="Stapleton M."/>
            <person name="Yamada C."/>
            <person name="Ashburner M."/>
            <person name="Gelbart W.M."/>
            <person name="Rubin G.M."/>
            <person name="Lewis S.E."/>
        </authorList>
    </citation>
    <scope>GENOME REANNOTATION</scope>
    <source>
        <strain evidence="17">Berkeley</strain>
    </source>
</reference>
<reference evidence="13" key="4">
    <citation type="journal article" date="2002" name="Genome Biol.">
        <title>A Drosophila full-length cDNA resource.</title>
        <authorList>
            <person name="Stapleton M."/>
            <person name="Carlson J.W."/>
            <person name="Brokstein P."/>
            <person name="Yu C."/>
            <person name="Champe M."/>
            <person name="George R.A."/>
            <person name="Guarin H."/>
            <person name="Kronmiller B."/>
            <person name="Pacleb J.M."/>
            <person name="Park S."/>
            <person name="Wan K.H."/>
            <person name="Rubin G.M."/>
            <person name="Celniker S.E."/>
        </authorList>
    </citation>
    <scope>NUCLEOTIDE SEQUENCE [LARGE SCALE MRNA]</scope>
    <source>
        <strain evidence="13">Berkeley</strain>
        <tissue evidence="13">Embryo</tissue>
    </source>
</reference>
<reference evidence="14" key="5">
    <citation type="journal article" date="2003" name="Oncogene">
        <title>Eiger and its receptor, Wengen, comprise a TNF-like system in Drosophila.</title>
        <authorList>
            <person name="Kauppila S."/>
            <person name="Maaty W.S."/>
            <person name="Chen P."/>
            <person name="Tomar R.S."/>
            <person name="Eby M.T."/>
            <person name="Chapo J."/>
            <person name="Chew S."/>
            <person name="Rathore N."/>
            <person name="Zachariah S."/>
            <person name="Sinha S.K."/>
            <person name="Abrams J.M."/>
            <person name="Chaudhary P.M."/>
        </authorList>
    </citation>
    <scope>NUCLEOTIDE SEQUENCE [MRNA] OF 14-343</scope>
    <scope>FUNCTION</scope>
    <scope>INTERACTION WITH TRAF6</scope>
    <scope>DEVELOPMENTAL STAGE</scope>
</reference>
<reference evidence="12" key="6">
    <citation type="journal article" date="2009" name="Dev. Cell">
        <title>Intrinsic tumor suppression and epithelial maintenance by endocytic activation of Eiger/TNF signaling in Drosophila.</title>
        <authorList>
            <person name="Igaki T."/>
            <person name="Pastor-Pareja J.C."/>
            <person name="Aonuma H."/>
            <person name="Miura M."/>
            <person name="Xu T."/>
        </authorList>
    </citation>
    <scope>FUNCTION</scope>
</reference>
<reference evidence="12" key="7">
    <citation type="journal article" date="2009" name="Curr. Biol.">
        <title>Cytokine signaling mediates UV-induced nociceptive sensitization in Drosophila larvae.</title>
        <authorList>
            <person name="Babcock D.T."/>
            <person name="Landry C."/>
            <person name="Galko M.J."/>
        </authorList>
    </citation>
    <scope>FUNCTION</scope>
</reference>
<reference evidence="12" key="8">
    <citation type="journal article" date="2013" name="PLoS ONE">
        <title>Wengen, the sole tumour necrosis factor receptor in Drosophila, collaborates with moesin to control photoreceptor axon targeting during development.</title>
        <authorList>
            <person name="Ruan W."/>
            <person name="Unsain N."/>
            <person name="Desbarats J."/>
            <person name="Fon E.A."/>
            <person name="Barker P.A."/>
        </authorList>
    </citation>
    <scope>FUNCTION</scope>
    <scope>INTERACTION WITH MOE</scope>
    <scope>DEVELOPMENTAL STAGE</scope>
</reference>
<reference key="9">
    <citation type="journal article" date="2021" name="Nat. Commun.">
        <title>Drosophila TNFRs Grindelwald and Wengen bind Eiger with different affinities and promote distinct cellular functions.</title>
        <authorList>
            <person name="Palmerini V."/>
            <person name="Monzani S."/>
            <person name="Laurichesse Q."/>
            <person name="Loudhaief R."/>
            <person name="Mari S."/>
            <person name="Cecatiello V."/>
            <person name="Olieric V."/>
            <person name="Pasqualato S."/>
            <person name="Colombani J."/>
            <person name="Andersen D.S."/>
            <person name="Mapelli M."/>
        </authorList>
    </citation>
    <scope>FUNCTION</scope>
    <scope>INTERACTION WITH EGR</scope>
    <scope>SUBCELLULAR LOCATION</scope>
</reference>
<reference key="10">
    <citation type="journal article" date="2024" name="Nat. Commun.">
        <title>Inter-cell type interactions that control JNK signaling in the Drosophila intestine.</title>
        <authorList>
            <person name="Zhang P."/>
            <person name="Pronovost S.M."/>
            <person name="Marchetti M."/>
            <person name="Zhang C."/>
            <person name="Kang X."/>
            <person name="Kandelouei T."/>
            <person name="Li C."/>
            <person name="Edgar B.A."/>
        </authorList>
    </citation>
    <scope>TISSUE SPECIFICITY</scope>
    <scope>INDUCTION BY BACTERIAL INFECTION</scope>
    <scope>DISRUPTION PHENOTYPE</scope>
</reference>
<accession>Q9VWS4</accession>
<accession>Q7Z1X1</accession>
<evidence type="ECO:0000255" key="1"/>
<evidence type="ECO:0000255" key="2">
    <source>
        <dbReference type="PROSITE-ProRule" id="PRU00206"/>
    </source>
</evidence>
<evidence type="ECO:0000256" key="3">
    <source>
        <dbReference type="SAM" id="MobiDB-lite"/>
    </source>
</evidence>
<evidence type="ECO:0000269" key="4">
    <source>
    </source>
</evidence>
<evidence type="ECO:0000269" key="5">
    <source>
    </source>
</evidence>
<evidence type="ECO:0000269" key="6">
    <source>
    </source>
</evidence>
<evidence type="ECO:0000269" key="7">
    <source>
    </source>
</evidence>
<evidence type="ECO:0000269" key="8">
    <source>
    </source>
</evidence>
<evidence type="ECO:0000269" key="9">
    <source>
    </source>
</evidence>
<evidence type="ECO:0000269" key="10">
    <source>
    </source>
</evidence>
<evidence type="ECO:0000303" key="11">
    <source>
    </source>
</evidence>
<evidence type="ECO:0000305" key="12"/>
<evidence type="ECO:0000312" key="13">
    <source>
        <dbReference type="EMBL" id="AAM48414.1"/>
    </source>
</evidence>
<evidence type="ECO:0000312" key="14">
    <source>
        <dbReference type="EMBL" id="AAM66764.1"/>
    </source>
</evidence>
<evidence type="ECO:0000312" key="15">
    <source>
        <dbReference type="EMBL" id="BAC01264.1"/>
    </source>
</evidence>
<evidence type="ECO:0000312" key="16">
    <source>
        <dbReference type="FlyBase" id="FBgn0030941"/>
    </source>
</evidence>
<evidence type="ECO:0000312" key="17">
    <source>
        <dbReference type="Proteomes" id="UP000000803"/>
    </source>
</evidence>